<accession>Q5HR07</accession>
<reference key="1">
    <citation type="journal article" date="2005" name="J. Bacteriol.">
        <title>Insights on evolution of virulence and resistance from the complete genome analysis of an early methicillin-resistant Staphylococcus aureus strain and a biofilm-producing methicillin-resistant Staphylococcus epidermidis strain.</title>
        <authorList>
            <person name="Gill S.R."/>
            <person name="Fouts D.E."/>
            <person name="Archer G.L."/>
            <person name="Mongodin E.F."/>
            <person name="DeBoy R.T."/>
            <person name="Ravel J."/>
            <person name="Paulsen I.T."/>
            <person name="Kolonay J.F."/>
            <person name="Brinkac L.M."/>
            <person name="Beanan M.J."/>
            <person name="Dodson R.J."/>
            <person name="Daugherty S.C."/>
            <person name="Madupu R."/>
            <person name="Angiuoli S.V."/>
            <person name="Durkin A.S."/>
            <person name="Haft D.H."/>
            <person name="Vamathevan J.J."/>
            <person name="Khouri H."/>
            <person name="Utterback T.R."/>
            <person name="Lee C."/>
            <person name="Dimitrov G."/>
            <person name="Jiang L."/>
            <person name="Qin H."/>
            <person name="Weidman J."/>
            <person name="Tran K."/>
            <person name="Kang K.H."/>
            <person name="Hance I.R."/>
            <person name="Nelson K.E."/>
            <person name="Fraser C.M."/>
        </authorList>
    </citation>
    <scope>NUCLEOTIDE SEQUENCE [LARGE SCALE GENOMIC DNA]</scope>
    <source>
        <strain>ATCC 35984 / DSM 28319 / BCRC 17069 / CCUG 31568 / BM 3577 / RP62A</strain>
    </source>
</reference>
<protein>
    <recommendedName>
        <fullName>Putative 5'(3')-deoxyribonucleotidase</fullName>
        <ecNumber>3.1.3.-</ecNumber>
    </recommendedName>
</protein>
<keyword id="KW-0378">Hydrolase</keyword>
<keyword id="KW-0460">Magnesium</keyword>
<keyword id="KW-0479">Metal-binding</keyword>
<keyword id="KW-1185">Reference proteome</keyword>
<gene>
    <name type="ordered locus">SERP0388</name>
</gene>
<dbReference type="EC" id="3.1.3.-"/>
<dbReference type="EMBL" id="CP000029">
    <property type="protein sequence ID" value="AAW53769.1"/>
    <property type="molecule type" value="Genomic_DNA"/>
</dbReference>
<dbReference type="RefSeq" id="WP_001832599.1">
    <property type="nucleotide sequence ID" value="NC_002976.3"/>
</dbReference>
<dbReference type="SMR" id="Q5HR07"/>
<dbReference type="STRING" id="176279.SERP0388"/>
<dbReference type="KEGG" id="ser:SERP0388"/>
<dbReference type="eggNOG" id="COG4502">
    <property type="taxonomic scope" value="Bacteria"/>
</dbReference>
<dbReference type="HOGENOM" id="CLU_111510_0_0_9"/>
<dbReference type="Proteomes" id="UP000000531">
    <property type="component" value="Chromosome"/>
</dbReference>
<dbReference type="GO" id="GO:0008253">
    <property type="term" value="F:5'-nucleotidase activity"/>
    <property type="evidence" value="ECO:0007669"/>
    <property type="project" value="InterPro"/>
</dbReference>
<dbReference type="GO" id="GO:0046872">
    <property type="term" value="F:metal ion binding"/>
    <property type="evidence" value="ECO:0007669"/>
    <property type="project" value="UniProtKB-KW"/>
</dbReference>
<dbReference type="GO" id="GO:0009223">
    <property type="term" value="P:pyrimidine deoxyribonucleotide catabolic process"/>
    <property type="evidence" value="ECO:0007669"/>
    <property type="project" value="TreeGrafter"/>
</dbReference>
<dbReference type="CDD" id="cd02587">
    <property type="entry name" value="HAD_5-3dNT"/>
    <property type="match status" value="1"/>
</dbReference>
<dbReference type="Gene3D" id="1.10.40.40">
    <property type="entry name" value="Deoxyribonucleotidase, domain 2"/>
    <property type="match status" value="1"/>
</dbReference>
<dbReference type="Gene3D" id="3.40.50.1000">
    <property type="entry name" value="HAD superfamily/HAD-like"/>
    <property type="match status" value="1"/>
</dbReference>
<dbReference type="InterPro" id="IPR010708">
    <property type="entry name" value="5'(3')-deoxyribonucleotidase"/>
</dbReference>
<dbReference type="InterPro" id="IPR036412">
    <property type="entry name" value="HAD-like_sf"/>
</dbReference>
<dbReference type="InterPro" id="IPR023214">
    <property type="entry name" value="HAD_sf"/>
</dbReference>
<dbReference type="PANTHER" id="PTHR16504">
    <property type="entry name" value="5'(3')-DEOXYRIBONUCLEOTIDASE"/>
    <property type="match status" value="1"/>
</dbReference>
<dbReference type="PANTHER" id="PTHR16504:SF4">
    <property type="entry name" value="5'(3')-DEOXYRIBONUCLEOTIDASE"/>
    <property type="match status" value="1"/>
</dbReference>
<dbReference type="Pfam" id="PF06941">
    <property type="entry name" value="NT5C"/>
    <property type="match status" value="1"/>
</dbReference>
<dbReference type="SFLD" id="SFLDG01146">
    <property type="entry name" value="C1.2.2"/>
    <property type="match status" value="1"/>
</dbReference>
<dbReference type="SFLD" id="SFLDG01126">
    <property type="entry name" value="C1.2:_Nucleotidase_Like"/>
    <property type="match status" value="1"/>
</dbReference>
<dbReference type="SUPFAM" id="SSF56784">
    <property type="entry name" value="HAD-like"/>
    <property type="match status" value="1"/>
</dbReference>
<comment type="function">
    <text evidence="3">Dephosphorylates the 5' and 2'(3')-phosphates of deoxyribonucleotides.</text>
</comment>
<comment type="cofactor">
    <cofactor evidence="2">
        <name>Mg(2+)</name>
        <dbReference type="ChEBI" id="CHEBI:18420"/>
    </cofactor>
</comment>
<comment type="similarity">
    <text evidence="3">Belongs to the 5'(3')-deoxyribonucleotidase family.</text>
</comment>
<sequence>MTRQRIAIDMDEVLADTLGAVVKAVNERADLNIKMESLNGKKLKHMIPEHEGLVMDILKEPGFFRNLDVMPHAQEVVKQLNEHYDIYIATAAMDVPTSFHDKYEWLLEYFPFLDPQHFVFCGRKNIILADYLIDDNPKQLEIFEGKSIMFTASHNVNEHRFERVSGWRDVKNYFNSIEK</sequence>
<evidence type="ECO:0000250" key="1">
    <source>
        <dbReference type="UniProtKB" id="Q8CTG7"/>
    </source>
</evidence>
<evidence type="ECO:0000250" key="2">
    <source>
        <dbReference type="UniProtKB" id="Q97JQ5"/>
    </source>
</evidence>
<evidence type="ECO:0000305" key="3"/>
<name>53DR_STAEQ</name>
<organism>
    <name type="scientific">Staphylococcus epidermidis (strain ATCC 35984 / DSM 28319 / BCRC 17069 / CCUG 31568 / BM 3577 / RP62A)</name>
    <dbReference type="NCBI Taxonomy" id="176279"/>
    <lineage>
        <taxon>Bacteria</taxon>
        <taxon>Bacillati</taxon>
        <taxon>Bacillota</taxon>
        <taxon>Bacilli</taxon>
        <taxon>Bacillales</taxon>
        <taxon>Staphylococcaceae</taxon>
        <taxon>Staphylococcus</taxon>
    </lineage>
</organism>
<proteinExistence type="inferred from homology"/>
<feature type="chain" id="PRO_0000164387" description="Putative 5'(3')-deoxyribonucleotidase">
    <location>
        <begin position="1"/>
        <end position="179"/>
    </location>
</feature>
<feature type="active site" description="Nucleophile" evidence="3">
    <location>
        <position position="9"/>
    </location>
</feature>
<feature type="active site" description="Proton donor" evidence="3">
    <location>
        <position position="11"/>
    </location>
</feature>
<feature type="binding site" evidence="1">
    <location>
        <position position="9"/>
    </location>
    <ligand>
        <name>Mg(2+)</name>
        <dbReference type="ChEBI" id="CHEBI:18420"/>
    </ligand>
</feature>
<feature type="binding site" evidence="1">
    <location>
        <position position="11"/>
    </location>
    <ligand>
        <name>Mg(2+)</name>
        <dbReference type="ChEBI" id="CHEBI:18420"/>
    </ligand>
</feature>
<feature type="binding site" evidence="1">
    <location>
        <position position="135"/>
    </location>
    <ligand>
        <name>Mg(2+)</name>
        <dbReference type="ChEBI" id="CHEBI:18420"/>
    </ligand>
</feature>